<sequence>MQKVLAIVGPTAIGKTDLAISLAKKLNGEIVSGDSMQVYHEVEVGTAKATKEEQAEVKHYLVDTRSVFDEYSVKDFVDEATEAINDIGEKNKLPILAGGTGFYVNALLNKMQLGERKEEDSGTSQKWEDYLKQNGPQKLWDILNEKDPEAAKKIPVPNSRRTMRALTVIDRTGKKFSQQQKKIEPRYDYLIIGLNSDRQEIYRRINLRVDRMMQKGMLEEAKFIYQNRDKEHQVLQAIAYKEFFPYFKGEKTLNECVEQLKTASRRYAKRQLTYFRNQLPVNWFDPLNDPDCEDKIIKNIEAWKNE</sequence>
<feature type="chain" id="PRO_1000071681" description="tRNA dimethylallyltransferase">
    <location>
        <begin position="1"/>
        <end position="306"/>
    </location>
</feature>
<feature type="region of interest" description="Interaction with substrate tRNA" evidence="1">
    <location>
        <begin position="34"/>
        <end position="37"/>
    </location>
</feature>
<feature type="binding site" evidence="1">
    <location>
        <begin position="9"/>
        <end position="16"/>
    </location>
    <ligand>
        <name>ATP</name>
        <dbReference type="ChEBI" id="CHEBI:30616"/>
    </ligand>
</feature>
<feature type="binding site" evidence="1">
    <location>
        <begin position="11"/>
        <end position="16"/>
    </location>
    <ligand>
        <name>substrate</name>
    </ligand>
</feature>
<feature type="site" description="Interaction with substrate tRNA" evidence="1">
    <location>
        <position position="100"/>
    </location>
</feature>
<dbReference type="EC" id="2.5.1.75" evidence="1"/>
<dbReference type="EMBL" id="CP000517">
    <property type="protein sequence ID" value="ABX27491.1"/>
    <property type="molecule type" value="Genomic_DNA"/>
</dbReference>
<dbReference type="RefSeq" id="WP_012212101.1">
    <property type="nucleotide sequence ID" value="NC_010080.1"/>
</dbReference>
<dbReference type="SMR" id="A8YWA5"/>
<dbReference type="KEGG" id="lhe:lhv_1564"/>
<dbReference type="eggNOG" id="COG0324">
    <property type="taxonomic scope" value="Bacteria"/>
</dbReference>
<dbReference type="HOGENOM" id="CLU_032616_0_1_9"/>
<dbReference type="Proteomes" id="UP000000790">
    <property type="component" value="Chromosome"/>
</dbReference>
<dbReference type="GO" id="GO:0005524">
    <property type="term" value="F:ATP binding"/>
    <property type="evidence" value="ECO:0007669"/>
    <property type="project" value="UniProtKB-UniRule"/>
</dbReference>
<dbReference type="GO" id="GO:0052381">
    <property type="term" value="F:tRNA dimethylallyltransferase activity"/>
    <property type="evidence" value="ECO:0007669"/>
    <property type="project" value="UniProtKB-UniRule"/>
</dbReference>
<dbReference type="GO" id="GO:0006400">
    <property type="term" value="P:tRNA modification"/>
    <property type="evidence" value="ECO:0007669"/>
    <property type="project" value="TreeGrafter"/>
</dbReference>
<dbReference type="Gene3D" id="1.10.20.140">
    <property type="match status" value="1"/>
</dbReference>
<dbReference type="Gene3D" id="3.40.50.300">
    <property type="entry name" value="P-loop containing nucleotide triphosphate hydrolases"/>
    <property type="match status" value="1"/>
</dbReference>
<dbReference type="HAMAP" id="MF_00185">
    <property type="entry name" value="IPP_trans"/>
    <property type="match status" value="1"/>
</dbReference>
<dbReference type="InterPro" id="IPR039657">
    <property type="entry name" value="Dimethylallyltransferase"/>
</dbReference>
<dbReference type="InterPro" id="IPR018022">
    <property type="entry name" value="IPT"/>
</dbReference>
<dbReference type="InterPro" id="IPR027417">
    <property type="entry name" value="P-loop_NTPase"/>
</dbReference>
<dbReference type="NCBIfam" id="TIGR00174">
    <property type="entry name" value="miaA"/>
    <property type="match status" value="1"/>
</dbReference>
<dbReference type="PANTHER" id="PTHR11088">
    <property type="entry name" value="TRNA DIMETHYLALLYLTRANSFERASE"/>
    <property type="match status" value="1"/>
</dbReference>
<dbReference type="PANTHER" id="PTHR11088:SF60">
    <property type="entry name" value="TRNA DIMETHYLALLYLTRANSFERASE"/>
    <property type="match status" value="1"/>
</dbReference>
<dbReference type="Pfam" id="PF01715">
    <property type="entry name" value="IPPT"/>
    <property type="match status" value="1"/>
</dbReference>
<dbReference type="SUPFAM" id="SSF52540">
    <property type="entry name" value="P-loop containing nucleoside triphosphate hydrolases"/>
    <property type="match status" value="2"/>
</dbReference>
<accession>A8YWA5</accession>
<reference key="1">
    <citation type="journal article" date="2008" name="J. Bacteriol.">
        <title>Genome sequence of Lactobacillus helveticus: an organism distinguished by selective gene loss and IS element expansion.</title>
        <authorList>
            <person name="Callanan M."/>
            <person name="Kaleta P."/>
            <person name="O'Callaghan J."/>
            <person name="O'Sullivan O."/>
            <person name="Jordan K."/>
            <person name="McAuliffe O."/>
            <person name="Sangrador-Vegas A."/>
            <person name="Slattery L."/>
            <person name="Fitzgerald G.F."/>
            <person name="Beresford T."/>
            <person name="Ross R.P."/>
        </authorList>
    </citation>
    <scope>NUCLEOTIDE SEQUENCE [LARGE SCALE GENOMIC DNA]</scope>
    <source>
        <strain>DPC 4571</strain>
    </source>
</reference>
<keyword id="KW-0067">ATP-binding</keyword>
<keyword id="KW-0460">Magnesium</keyword>
<keyword id="KW-0547">Nucleotide-binding</keyword>
<keyword id="KW-0808">Transferase</keyword>
<keyword id="KW-0819">tRNA processing</keyword>
<comment type="function">
    <text evidence="1">Catalyzes the transfer of a dimethylallyl group onto the adenine at position 37 in tRNAs that read codons beginning with uridine, leading to the formation of N6-(dimethylallyl)adenosine (i(6)A).</text>
</comment>
<comment type="catalytic activity">
    <reaction evidence="1">
        <text>adenosine(37) in tRNA + dimethylallyl diphosphate = N(6)-dimethylallyladenosine(37) in tRNA + diphosphate</text>
        <dbReference type="Rhea" id="RHEA:26482"/>
        <dbReference type="Rhea" id="RHEA-COMP:10162"/>
        <dbReference type="Rhea" id="RHEA-COMP:10375"/>
        <dbReference type="ChEBI" id="CHEBI:33019"/>
        <dbReference type="ChEBI" id="CHEBI:57623"/>
        <dbReference type="ChEBI" id="CHEBI:74411"/>
        <dbReference type="ChEBI" id="CHEBI:74415"/>
        <dbReference type="EC" id="2.5.1.75"/>
    </reaction>
</comment>
<comment type="cofactor">
    <cofactor evidence="1">
        <name>Mg(2+)</name>
        <dbReference type="ChEBI" id="CHEBI:18420"/>
    </cofactor>
</comment>
<comment type="subunit">
    <text evidence="1">Monomer.</text>
</comment>
<comment type="similarity">
    <text evidence="1">Belongs to the IPP transferase family.</text>
</comment>
<gene>
    <name evidence="1" type="primary">miaA</name>
    <name type="ordered locus">lhv_1564</name>
</gene>
<protein>
    <recommendedName>
        <fullName evidence="1">tRNA dimethylallyltransferase</fullName>
        <ecNumber evidence="1">2.5.1.75</ecNumber>
    </recommendedName>
    <alternativeName>
        <fullName evidence="1">Dimethylallyl diphosphate:tRNA dimethylallyltransferase</fullName>
        <shortName evidence="1">DMAPP:tRNA dimethylallyltransferase</shortName>
        <shortName evidence="1">DMATase</shortName>
    </alternativeName>
    <alternativeName>
        <fullName evidence="1">Isopentenyl-diphosphate:tRNA isopentenyltransferase</fullName>
        <shortName evidence="1">IPP transferase</shortName>
        <shortName evidence="1">IPPT</shortName>
        <shortName evidence="1">IPTase</shortName>
    </alternativeName>
</protein>
<organism>
    <name type="scientific">Lactobacillus helveticus (strain DPC 4571)</name>
    <dbReference type="NCBI Taxonomy" id="405566"/>
    <lineage>
        <taxon>Bacteria</taxon>
        <taxon>Bacillati</taxon>
        <taxon>Bacillota</taxon>
        <taxon>Bacilli</taxon>
        <taxon>Lactobacillales</taxon>
        <taxon>Lactobacillaceae</taxon>
        <taxon>Lactobacillus</taxon>
    </lineage>
</organism>
<name>MIAA_LACH4</name>
<evidence type="ECO:0000255" key="1">
    <source>
        <dbReference type="HAMAP-Rule" id="MF_00185"/>
    </source>
</evidence>
<proteinExistence type="inferred from homology"/>